<proteinExistence type="evidence at protein level"/>
<evidence type="ECO:0000250" key="1"/>
<evidence type="ECO:0000250" key="2">
    <source>
        <dbReference type="UniProtKB" id="P24605"/>
    </source>
</evidence>
<evidence type="ECO:0000269" key="3">
    <source>
    </source>
</evidence>
<evidence type="ECO:0000269" key="4">
    <source>
    </source>
</evidence>
<evidence type="ECO:0000269" key="5">
    <source>
    </source>
</evidence>
<evidence type="ECO:0000269" key="6">
    <source>
    </source>
</evidence>
<evidence type="ECO:0000269" key="7">
    <source>
    </source>
</evidence>
<evidence type="ECO:0000269" key="8">
    <source>
    </source>
</evidence>
<evidence type="ECO:0000269" key="9">
    <source>
    </source>
</evidence>
<evidence type="ECO:0000269" key="10">
    <source>
    </source>
</evidence>
<evidence type="ECO:0000269" key="11">
    <source>
    </source>
</evidence>
<evidence type="ECO:0000269" key="12">
    <source>
    </source>
</evidence>
<evidence type="ECO:0000303" key="13">
    <source>
    </source>
</evidence>
<evidence type="ECO:0000303" key="14">
    <source>
    </source>
</evidence>
<evidence type="ECO:0000303" key="15">
    <source>
    </source>
</evidence>
<evidence type="ECO:0000303" key="16">
    <source>
    </source>
</evidence>
<evidence type="ECO:0000303" key="17">
    <source>
    </source>
</evidence>
<evidence type="ECO:0000303" key="18">
    <source>
    </source>
</evidence>
<evidence type="ECO:0000305" key="19"/>
<evidence type="ECO:0000305" key="20">
    <source>
    </source>
</evidence>
<evidence type="ECO:0007744" key="21">
    <source>
        <dbReference type="PDB" id="5TFV"/>
    </source>
</evidence>
<evidence type="ECO:0007829" key="22">
    <source>
        <dbReference type="PDB" id="5TFV"/>
    </source>
</evidence>
<protein>
    <recommendedName>
        <fullName evidence="15">Basic phospholipase A2 myotoxin I</fullName>
        <shortName evidence="15">MT-I</shortName>
        <shortName>svPLA2</shortName>
        <ecNumber evidence="4">3.1.1.4</ecNumber>
    </recommendedName>
    <alternativeName>
        <fullName evidence="14 16">Myotoxic phospholipase</fullName>
    </alternativeName>
    <alternativeName>
        <fullName evidence="13 17 18">Myotoxin III</fullName>
    </alternativeName>
    <alternativeName>
        <fullName>Phosphatidylcholine 2-acylhydrolase</fullName>
    </alternativeName>
</protein>
<reference key="1">
    <citation type="journal article" date="2001" name="Int. J. Biochem. Cell Biol.">
        <title>Cloning and cDNA sequence analysis of Lys(49) and Asp(49) basic phospholipase A(2) myotoxin isoforms from Bothrops asper.</title>
        <authorList>
            <person name="Lizano S."/>
            <person name="Lambeau G."/>
            <person name="Lazdunski M."/>
        </authorList>
    </citation>
    <scope>NUCLEOTIDE SEQUENCE [MRNA]</scope>
    <source>
        <tissue>Venom gland</tissue>
    </source>
</reference>
<reference key="2">
    <citation type="journal article" date="1990" name="Arch. Biochem. Biophys.">
        <title>The amino acid sequence of a myotoxic phospholipase from the venom of Bothrops asper.</title>
        <authorList>
            <person name="Kaiser I.I."/>
            <person name="Gutierrez J.M."/>
            <person name="Plummer D."/>
            <person name="Aird S.D."/>
            <person name="Odell G.V."/>
        </authorList>
    </citation>
    <scope>PROTEIN SEQUENCE OF 17-138</scope>
    <scope>FUNCTION</scope>
    <scope>CATALYTIC ACTIVITY</scope>
    <scope>SUBUNIT</scope>
    <scope>SUBCELLULAR LOCATION</scope>
    <scope>TOXIC DOSE</scope>
    <source>
        <tissue>Venom</tissue>
    </source>
</reference>
<reference key="3">
    <citation type="journal article" date="2014" name="PeerJ">
        <title>Role of enzymatic activity in muscle damage and cytotoxicity induced by Bothrops asper Asp49 phospholipase A2 myotoxins: are there additional effector mechanisms involved?</title>
        <authorList>
            <person name="Mora-Obando D."/>
            <person name="Diaz C."/>
            <person name="Angulo Y."/>
            <person name="Gutierrez J.M."/>
            <person name="Lomonte B."/>
        </authorList>
    </citation>
    <scope>PROTEIN SEQUENCE OF 17-26</scope>
    <scope>FUNCTION</scope>
    <source>
        <tissue>Venom</tissue>
    </source>
</reference>
<reference key="4">
    <citation type="journal article" date="1984" name="Toxicon">
        <title>Isolation of a myotoxin from Bothrops asper venom: partial characterization and action on skeletal muscle.</title>
        <authorList>
            <person name="Gutierrez J.M."/>
            <person name="Ownby C.L."/>
            <person name="Odell G.V."/>
        </authorList>
    </citation>
    <scope>FUNCTION</scope>
</reference>
<reference key="5">
    <citation type="journal article" date="1986" name="Comp. Biochem. Physiol.">
        <title>Pharmacological activities of a toxic phospholipase A isolated from the venom of the snake Bothrops asper.</title>
        <authorList>
            <person name="Gutierrez J.M."/>
            <person name="Lomonte B."/>
            <person name="Chaves F."/>
            <person name="Moreno E."/>
            <person name="Cerdas L."/>
        </authorList>
    </citation>
    <scope>FUNCTION</scope>
    <scope>TOXIC DOSE</scope>
</reference>
<reference key="6">
    <citation type="journal article" date="1993" name="Biochim. Biophys. Acta">
        <title>Effects on cultured mammalian cells of myotoxin III, a phospholipase A2 isolated from Bothrops asper (terciopelo) venom.</title>
        <authorList>
            <person name="Butron E."/>
            <person name="Ghelestam M."/>
            <person name="Gutierrez J.M."/>
        </authorList>
    </citation>
    <scope>FUNCTION</scope>
</reference>
<reference key="7">
    <citation type="journal article" date="1993" name="Toxicon">
        <title>Effects of Bothrops asper (terciopelo) myotoxin III, a basic phospholipase A2, on liposomes and mouse gastrocnemius muscle.</title>
        <authorList>
            <person name="Bultron E."/>
            <person name="Gutierrez J.M."/>
            <person name="Thelestam M."/>
        </authorList>
    </citation>
    <scope>FUNCTION</scope>
</reference>
<reference key="8">
    <citation type="journal article" date="1998" name="Eur. J. Biochem.">
        <title>Bactericidal activity of Lys49 and Asp49 myotoxic phospholipases A2 from Bothrops asper snake venom--synthetic Lys49 myotoxin II-(115-129)-peptide identifies its bactericidal region.</title>
        <authorList>
            <person name="Paramo L."/>
            <person name="Lomonte B."/>
            <person name="Pizarro-Cerda J."/>
            <person name="Bengoechea J.A."/>
            <person name="Gorvel J.P."/>
            <person name="Moreno E."/>
        </authorList>
    </citation>
    <scope>FUNCTION TOWARDS BACTERIA</scope>
    <source>
        <tissue>Venom</tissue>
    </source>
</reference>
<reference key="9">
    <citation type="journal article" date="1998" name="Toxicon">
        <title>Pharmacological modulation of edema induced by Lys-49 and Asp-49 myotoxic phospholipases A2 isolated from the venom of the snake Bothrops asper (terciopelo).</title>
        <authorList>
            <person name="Chaves F."/>
            <person name="Leon G."/>
            <person name="Alvarado V.H."/>
            <person name="Gutierrez J.M."/>
        </authorList>
    </citation>
    <scope>FUNCTION IN EDEMA</scope>
</reference>
<reference key="10">
    <citation type="journal article" date="1999" name="Toxicon">
        <title>Comparative study of the cytolytic activity of myotoxic phospholipases A2 on mouse endothelial (tEnd) and skeletal muscle (C2C12) cells in vitro.</title>
        <authorList>
            <person name="Lomonte B."/>
            <person name="Angulo Y."/>
            <person name="Rufini S."/>
            <person name="Cho W."/>
            <person name="Giglio J.R."/>
            <person name="Ohno M."/>
            <person name="Daniele J.J."/>
            <person name="Geoghegan P."/>
            <person name="Gutierrez J.M."/>
        </authorList>
    </citation>
    <scope>FUNCTION IN CYTOTOXICITY</scope>
    <source>
        <tissue>Venom</tissue>
    </source>
</reference>
<reference key="11">
    <citation type="journal article" date="2011" name="Cell Biochem. Funct.">
        <title>Membrane cholesterol modulates the cytolytic mechanism of myotoxin II, a Lys49 phospholipase A2 homologue from the venom of Bothrops asper.</title>
        <authorList>
            <person name="Rangel J."/>
            <person name="Quesada O."/>
            <person name="Gutierrez J.M."/>
            <person name="Angulo Y."/>
            <person name="Lomonte B."/>
        </authorList>
    </citation>
    <scope>ACTIVITY REGULATION BY MEMBRANE CHOLESTEROL</scope>
    <source>
        <tissue>Venom</tissue>
    </source>
</reference>
<reference key="12">
    <citation type="journal article" date="2017" name="Biochimie">
        <title>Crystal structure of a phospholipase A2 from Bothrops asper venom: insights into a new putative 'myotoxic cluster'.</title>
        <authorList>
            <person name="Salvador G.H."/>
            <person name="Dos Santos J.I."/>
            <person name="Lomonte B."/>
            <person name="Fontes M.R."/>
        </authorList>
    </citation>
    <scope>X-RAY CRYSTALLOGRAPHY (2.54 ANGSTROMS) OF 17-138</scope>
    <scope>DISULFIDE BONDS</scope>
    <source>
        <tissue>Venom</tissue>
    </source>
</reference>
<keyword id="KW-0002">3D-structure</keyword>
<keyword id="KW-0044">Antibiotic</keyword>
<keyword id="KW-0929">Antimicrobial</keyword>
<keyword id="KW-0106">Calcium</keyword>
<keyword id="KW-0903">Direct protein sequencing</keyword>
<keyword id="KW-1015">Disulfide bond</keyword>
<keyword id="KW-0378">Hydrolase</keyword>
<keyword id="KW-0442">Lipid degradation</keyword>
<keyword id="KW-0443">Lipid metabolism</keyword>
<keyword id="KW-0479">Metal-binding</keyword>
<keyword id="KW-0959">Myotoxin</keyword>
<keyword id="KW-0964">Secreted</keyword>
<keyword id="KW-0732">Signal</keyword>
<keyword id="KW-0800">Toxin</keyword>
<comment type="function">
    <text evidence="2 4 7 8 9 10 11 12">Snake venom phospholipase A2 (PLA2) that displays local myotoxic activity. It also displays anticoagulant action in plasma and edema-inducing activities (PubMed:2327788, PubMed:9839670). In addition, it shows cytotoxic activity to a variety of cell types and bactericidal activity to a variety of Gram-negative and Gram-positive bacteria (PubMed:9654096, PubMed:9920486). PLA2 catalyzes the calcium-dependent hydrolysis of the 2-acyl groups in 3-sn-phosphoglycerides.</text>
</comment>
<comment type="catalytic activity">
    <reaction evidence="4">
        <text>a 1,2-diacyl-sn-glycero-3-phosphocholine + H2O = a 1-acyl-sn-glycero-3-phosphocholine + a fatty acid + H(+)</text>
        <dbReference type="Rhea" id="RHEA:15801"/>
        <dbReference type="ChEBI" id="CHEBI:15377"/>
        <dbReference type="ChEBI" id="CHEBI:15378"/>
        <dbReference type="ChEBI" id="CHEBI:28868"/>
        <dbReference type="ChEBI" id="CHEBI:57643"/>
        <dbReference type="ChEBI" id="CHEBI:58168"/>
        <dbReference type="EC" id="3.1.1.4"/>
    </reaction>
</comment>
<comment type="cofactor">
    <cofactor evidence="1">
        <name>Ca(2+)</name>
        <dbReference type="ChEBI" id="CHEBI:29108"/>
    </cofactor>
    <text evidence="1">Binds 1 Ca(2+) ion.</text>
</comment>
<comment type="activity regulation">
    <text evidence="3">High level of membrane cholesterol content reduces cytolytic activity, whereas low level of membrane cholesterol content increases cytolytic activity (PubMed:21506137).</text>
</comment>
<comment type="subunit">
    <text evidence="4 5">Monomer (PubMed:2327788). Homodimer; non-covalently linked (alternative/compact dimer conformation) (PubMed:28034717).</text>
</comment>
<comment type="subcellular location">
    <subcellularLocation>
        <location evidence="4">Secreted</location>
    </subcellularLocation>
</comment>
<comment type="tissue specificity">
    <text evidence="20">Expressed by the venom gland.</text>
</comment>
<comment type="toxic dose">
    <text evidence="4 6">LD(50) is 5.6 mg/kg (95 ug/16-18 g) by intravenous injection into mice (PubMed:2873948). LD(50) is 25 ug/kg (0.42 ug/16-18 g) by intracerebroventricular injection into mice (PubMed:2873948). LD(50) is 8 mg/kg by intravenous injection into mice (PubMed:2327788).</text>
</comment>
<comment type="similarity">
    <text evidence="19">Belongs to the phospholipase A2 family. Group II subfamily. D49 sub-subfamily.</text>
</comment>
<sequence>MRTLWIMAVLLVGVEGSLIEFAKMILEETKRLPFPYYTTYGCYCGWGGQGQPKDATDRCCFVHDCCYGKLSNCKPKTDRYSYSRKSGVIICGEGTPCEKQICECDKAAAVCFRENLRTYKKRYMAYPDLLCKKPAEKC</sequence>
<organism>
    <name type="scientific">Bothrops asper</name>
    <name type="common">Terciopelo</name>
    <dbReference type="NCBI Taxonomy" id="8722"/>
    <lineage>
        <taxon>Eukaryota</taxon>
        <taxon>Metazoa</taxon>
        <taxon>Chordata</taxon>
        <taxon>Craniata</taxon>
        <taxon>Vertebrata</taxon>
        <taxon>Euteleostomi</taxon>
        <taxon>Lepidosauria</taxon>
        <taxon>Squamata</taxon>
        <taxon>Bifurcata</taxon>
        <taxon>Unidentata</taxon>
        <taxon>Episquamata</taxon>
        <taxon>Toxicofera</taxon>
        <taxon>Serpentes</taxon>
        <taxon>Colubroidea</taxon>
        <taxon>Viperidae</taxon>
        <taxon>Crotalinae</taxon>
        <taxon>Bothrops</taxon>
    </lineage>
</organism>
<accession>P20474</accession>
<feature type="signal peptide" evidence="4">
    <location>
        <begin position="1"/>
        <end position="16"/>
    </location>
</feature>
<feature type="chain" id="PRO_0000161617" description="Basic phospholipase A2 myotoxin I" evidence="4">
    <location>
        <begin position="17"/>
        <end position="138"/>
    </location>
</feature>
<feature type="active site" evidence="1">
    <location>
        <position position="63"/>
    </location>
</feature>
<feature type="active site" evidence="1">
    <location>
        <position position="105"/>
    </location>
</feature>
<feature type="binding site" evidence="1">
    <location>
        <position position="43"/>
    </location>
    <ligand>
        <name>Ca(2+)</name>
        <dbReference type="ChEBI" id="CHEBI:29108"/>
    </ligand>
</feature>
<feature type="binding site" evidence="1">
    <location>
        <position position="45"/>
    </location>
    <ligand>
        <name>Ca(2+)</name>
        <dbReference type="ChEBI" id="CHEBI:29108"/>
    </ligand>
</feature>
<feature type="binding site" evidence="1">
    <location>
        <position position="47"/>
    </location>
    <ligand>
        <name>Ca(2+)</name>
        <dbReference type="ChEBI" id="CHEBI:29108"/>
    </ligand>
</feature>
<feature type="binding site" evidence="1">
    <location>
        <position position="64"/>
    </location>
    <ligand>
        <name>Ca(2+)</name>
        <dbReference type="ChEBI" id="CHEBI:29108"/>
    </ligand>
</feature>
<feature type="disulfide bond" evidence="5 21">
    <location>
        <begin position="42"/>
        <end position="131"/>
    </location>
</feature>
<feature type="disulfide bond" evidence="5 21">
    <location>
        <begin position="44"/>
        <end position="60"/>
    </location>
</feature>
<feature type="disulfide bond" evidence="5 21">
    <location>
        <begin position="59"/>
        <end position="111"/>
    </location>
</feature>
<feature type="disulfide bond" evidence="5 21">
    <location>
        <begin position="65"/>
        <end position="138"/>
    </location>
</feature>
<feature type="disulfide bond" evidence="5 21">
    <location>
        <begin position="66"/>
        <end position="104"/>
    </location>
</feature>
<feature type="disulfide bond" evidence="5 21">
    <location>
        <begin position="73"/>
        <end position="97"/>
    </location>
</feature>
<feature type="disulfide bond" evidence="5 21">
    <location>
        <begin position="91"/>
        <end position="102"/>
    </location>
</feature>
<feature type="helix" evidence="22">
    <location>
        <begin position="18"/>
        <end position="29"/>
    </location>
</feature>
<feature type="helix" evidence="22">
    <location>
        <begin position="33"/>
        <end position="36"/>
    </location>
</feature>
<feature type="turn" evidence="22">
    <location>
        <begin position="37"/>
        <end position="39"/>
    </location>
</feature>
<feature type="turn" evidence="22">
    <location>
        <begin position="41"/>
        <end position="48"/>
    </location>
</feature>
<feature type="helix" evidence="22">
    <location>
        <begin position="55"/>
        <end position="68"/>
    </location>
</feature>
<feature type="turn" evidence="22">
    <location>
        <begin position="75"/>
        <end position="77"/>
    </location>
</feature>
<feature type="strand" evidence="22">
    <location>
        <begin position="82"/>
        <end position="85"/>
    </location>
</feature>
<feature type="strand" evidence="22">
    <location>
        <begin position="88"/>
        <end position="91"/>
    </location>
</feature>
<feature type="helix" evidence="22">
    <location>
        <begin position="96"/>
        <end position="114"/>
    </location>
</feature>
<feature type="turn" evidence="22">
    <location>
        <begin position="115"/>
        <end position="118"/>
    </location>
</feature>
<feature type="helix" evidence="22">
    <location>
        <begin position="121"/>
        <end position="123"/>
    </location>
</feature>
<feature type="helix" evidence="22">
    <location>
        <begin position="128"/>
        <end position="130"/>
    </location>
</feature>
<dbReference type="EC" id="3.1.1.4" evidence="4"/>
<dbReference type="PIR" id="S09314">
    <property type="entry name" value="S09314"/>
</dbReference>
<dbReference type="PDB" id="5TFV">
    <property type="method" value="X-ray"/>
    <property type="resolution" value="2.54 A"/>
    <property type="chains" value="A/B=17-138"/>
</dbReference>
<dbReference type="PDBsum" id="5TFV"/>
<dbReference type="SMR" id="P20474"/>
<dbReference type="BRENDA" id="3.1.1.4">
    <property type="organism ID" value="909"/>
</dbReference>
<dbReference type="GO" id="GO:0005576">
    <property type="term" value="C:extracellular region"/>
    <property type="evidence" value="ECO:0007669"/>
    <property type="project" value="UniProtKB-SubCell"/>
</dbReference>
<dbReference type="GO" id="GO:0005509">
    <property type="term" value="F:calcium ion binding"/>
    <property type="evidence" value="ECO:0007669"/>
    <property type="project" value="InterPro"/>
</dbReference>
<dbReference type="GO" id="GO:0047498">
    <property type="term" value="F:calcium-dependent phospholipase A2 activity"/>
    <property type="evidence" value="ECO:0007669"/>
    <property type="project" value="TreeGrafter"/>
</dbReference>
<dbReference type="GO" id="GO:0005543">
    <property type="term" value="F:phospholipid binding"/>
    <property type="evidence" value="ECO:0007669"/>
    <property type="project" value="TreeGrafter"/>
</dbReference>
<dbReference type="GO" id="GO:0090729">
    <property type="term" value="F:toxin activity"/>
    <property type="evidence" value="ECO:0007669"/>
    <property type="project" value="UniProtKB-KW"/>
</dbReference>
<dbReference type="GO" id="GO:0050482">
    <property type="term" value="P:arachidonate secretion"/>
    <property type="evidence" value="ECO:0007669"/>
    <property type="project" value="InterPro"/>
</dbReference>
<dbReference type="GO" id="GO:0042742">
    <property type="term" value="P:defense response to bacterium"/>
    <property type="evidence" value="ECO:0007669"/>
    <property type="project" value="UniProtKB-KW"/>
</dbReference>
<dbReference type="GO" id="GO:0016042">
    <property type="term" value="P:lipid catabolic process"/>
    <property type="evidence" value="ECO:0007669"/>
    <property type="project" value="UniProtKB-KW"/>
</dbReference>
<dbReference type="GO" id="GO:0042130">
    <property type="term" value="P:negative regulation of T cell proliferation"/>
    <property type="evidence" value="ECO:0007669"/>
    <property type="project" value="TreeGrafter"/>
</dbReference>
<dbReference type="GO" id="GO:0006644">
    <property type="term" value="P:phospholipid metabolic process"/>
    <property type="evidence" value="ECO:0007669"/>
    <property type="project" value="InterPro"/>
</dbReference>
<dbReference type="CDD" id="cd00125">
    <property type="entry name" value="PLA2c"/>
    <property type="match status" value="1"/>
</dbReference>
<dbReference type="FunFam" id="1.20.90.10:FF:000001">
    <property type="entry name" value="Basic phospholipase A2 homolog"/>
    <property type="match status" value="1"/>
</dbReference>
<dbReference type="Gene3D" id="1.20.90.10">
    <property type="entry name" value="Phospholipase A2 domain"/>
    <property type="match status" value="1"/>
</dbReference>
<dbReference type="InterPro" id="IPR001211">
    <property type="entry name" value="PLipase_A2"/>
</dbReference>
<dbReference type="InterPro" id="IPR033112">
    <property type="entry name" value="PLipase_A2_Asp_AS"/>
</dbReference>
<dbReference type="InterPro" id="IPR016090">
    <property type="entry name" value="PLipase_A2_dom"/>
</dbReference>
<dbReference type="InterPro" id="IPR036444">
    <property type="entry name" value="PLipase_A2_dom_sf"/>
</dbReference>
<dbReference type="InterPro" id="IPR033113">
    <property type="entry name" value="PLipase_A2_His_AS"/>
</dbReference>
<dbReference type="PANTHER" id="PTHR11716">
    <property type="entry name" value="PHOSPHOLIPASE A2 FAMILY MEMBER"/>
    <property type="match status" value="1"/>
</dbReference>
<dbReference type="PANTHER" id="PTHR11716:SF9">
    <property type="entry name" value="PHOSPHOLIPASE A2, MEMBRANE ASSOCIATED"/>
    <property type="match status" value="1"/>
</dbReference>
<dbReference type="Pfam" id="PF00068">
    <property type="entry name" value="Phospholip_A2_1"/>
    <property type="match status" value="1"/>
</dbReference>
<dbReference type="PRINTS" id="PR00389">
    <property type="entry name" value="PHPHLIPASEA2"/>
</dbReference>
<dbReference type="SMART" id="SM00085">
    <property type="entry name" value="PA2c"/>
    <property type="match status" value="1"/>
</dbReference>
<dbReference type="SUPFAM" id="SSF48619">
    <property type="entry name" value="Phospholipase A2, PLA2"/>
    <property type="match status" value="1"/>
</dbReference>
<dbReference type="PROSITE" id="PS00119">
    <property type="entry name" value="PA2_ASP"/>
    <property type="match status" value="1"/>
</dbReference>
<dbReference type="PROSITE" id="PS00118">
    <property type="entry name" value="PA2_HIS"/>
    <property type="match status" value="1"/>
</dbReference>
<name>PA2B3_BOTAS</name>